<protein>
    <recommendedName>
        <fullName>Trafficking protein particle complex subunit 5</fullName>
    </recommendedName>
</protein>
<name>TPPC5_HUMAN</name>
<proteinExistence type="evidence at protein level"/>
<reference key="1">
    <citation type="journal article" date="2004" name="Nat. Genet.">
        <title>Complete sequencing and characterization of 21,243 full-length human cDNAs.</title>
        <authorList>
            <person name="Ota T."/>
            <person name="Suzuki Y."/>
            <person name="Nishikawa T."/>
            <person name="Otsuki T."/>
            <person name="Sugiyama T."/>
            <person name="Irie R."/>
            <person name="Wakamatsu A."/>
            <person name="Hayashi K."/>
            <person name="Sato H."/>
            <person name="Nagai K."/>
            <person name="Kimura K."/>
            <person name="Makita H."/>
            <person name="Sekine M."/>
            <person name="Obayashi M."/>
            <person name="Nishi T."/>
            <person name="Shibahara T."/>
            <person name="Tanaka T."/>
            <person name="Ishii S."/>
            <person name="Yamamoto J."/>
            <person name="Saito K."/>
            <person name="Kawai Y."/>
            <person name="Isono Y."/>
            <person name="Nakamura Y."/>
            <person name="Nagahari K."/>
            <person name="Murakami K."/>
            <person name="Yasuda T."/>
            <person name="Iwayanagi T."/>
            <person name="Wagatsuma M."/>
            <person name="Shiratori A."/>
            <person name="Sudo H."/>
            <person name="Hosoiri T."/>
            <person name="Kaku Y."/>
            <person name="Kodaira H."/>
            <person name="Kondo H."/>
            <person name="Sugawara M."/>
            <person name="Takahashi M."/>
            <person name="Kanda K."/>
            <person name="Yokoi T."/>
            <person name="Furuya T."/>
            <person name="Kikkawa E."/>
            <person name="Omura Y."/>
            <person name="Abe K."/>
            <person name="Kamihara K."/>
            <person name="Katsuta N."/>
            <person name="Sato K."/>
            <person name="Tanikawa M."/>
            <person name="Yamazaki M."/>
            <person name="Ninomiya K."/>
            <person name="Ishibashi T."/>
            <person name="Yamashita H."/>
            <person name="Murakawa K."/>
            <person name="Fujimori K."/>
            <person name="Tanai H."/>
            <person name="Kimata M."/>
            <person name="Watanabe M."/>
            <person name="Hiraoka S."/>
            <person name="Chiba Y."/>
            <person name="Ishida S."/>
            <person name="Ono Y."/>
            <person name="Takiguchi S."/>
            <person name="Watanabe S."/>
            <person name="Yosida M."/>
            <person name="Hotuta T."/>
            <person name="Kusano J."/>
            <person name="Kanehori K."/>
            <person name="Takahashi-Fujii A."/>
            <person name="Hara H."/>
            <person name="Tanase T.-O."/>
            <person name="Nomura Y."/>
            <person name="Togiya S."/>
            <person name="Komai F."/>
            <person name="Hara R."/>
            <person name="Takeuchi K."/>
            <person name="Arita M."/>
            <person name="Imose N."/>
            <person name="Musashino K."/>
            <person name="Yuuki H."/>
            <person name="Oshima A."/>
            <person name="Sasaki N."/>
            <person name="Aotsuka S."/>
            <person name="Yoshikawa Y."/>
            <person name="Matsunawa H."/>
            <person name="Ichihara T."/>
            <person name="Shiohata N."/>
            <person name="Sano S."/>
            <person name="Moriya S."/>
            <person name="Momiyama H."/>
            <person name="Satoh N."/>
            <person name="Takami S."/>
            <person name="Terashima Y."/>
            <person name="Suzuki O."/>
            <person name="Nakagawa S."/>
            <person name="Senoh A."/>
            <person name="Mizoguchi H."/>
            <person name="Goto Y."/>
            <person name="Shimizu F."/>
            <person name="Wakebe H."/>
            <person name="Hishigaki H."/>
            <person name="Watanabe T."/>
            <person name="Sugiyama A."/>
            <person name="Takemoto M."/>
            <person name="Kawakami B."/>
            <person name="Yamazaki M."/>
            <person name="Watanabe K."/>
            <person name="Kumagai A."/>
            <person name="Itakura S."/>
            <person name="Fukuzumi Y."/>
            <person name="Fujimori Y."/>
            <person name="Komiyama M."/>
            <person name="Tashiro H."/>
            <person name="Tanigami A."/>
            <person name="Fujiwara T."/>
            <person name="Ono T."/>
            <person name="Yamada K."/>
            <person name="Fujii Y."/>
            <person name="Ozaki K."/>
            <person name="Hirao M."/>
            <person name="Ohmori Y."/>
            <person name="Kawabata A."/>
            <person name="Hikiji T."/>
            <person name="Kobatake N."/>
            <person name="Inagaki H."/>
            <person name="Ikema Y."/>
            <person name="Okamoto S."/>
            <person name="Okitani R."/>
            <person name="Kawakami T."/>
            <person name="Noguchi S."/>
            <person name="Itoh T."/>
            <person name="Shigeta K."/>
            <person name="Senba T."/>
            <person name="Matsumura K."/>
            <person name="Nakajima Y."/>
            <person name="Mizuno T."/>
            <person name="Morinaga M."/>
            <person name="Sasaki M."/>
            <person name="Togashi T."/>
            <person name="Oyama M."/>
            <person name="Hata H."/>
            <person name="Watanabe M."/>
            <person name="Komatsu T."/>
            <person name="Mizushima-Sugano J."/>
            <person name="Satoh T."/>
            <person name="Shirai Y."/>
            <person name="Takahashi Y."/>
            <person name="Nakagawa K."/>
            <person name="Okumura K."/>
            <person name="Nagase T."/>
            <person name="Nomura N."/>
            <person name="Kikuchi H."/>
            <person name="Masuho Y."/>
            <person name="Yamashita R."/>
            <person name="Nakai K."/>
            <person name="Yada T."/>
            <person name="Nakamura Y."/>
            <person name="Ohara O."/>
            <person name="Isogai T."/>
            <person name="Sugano S."/>
        </authorList>
    </citation>
    <scope>NUCLEOTIDE SEQUENCE [LARGE SCALE MRNA]</scope>
    <source>
        <tissue>Small intestine</tissue>
    </source>
</reference>
<reference key="2">
    <citation type="submission" date="2005-09" db="EMBL/GenBank/DDBJ databases">
        <authorList>
            <person name="Mural R.J."/>
            <person name="Istrail S."/>
            <person name="Sutton G.G."/>
            <person name="Florea L."/>
            <person name="Halpern A.L."/>
            <person name="Mobarry C.M."/>
            <person name="Lippert R."/>
            <person name="Walenz B."/>
            <person name="Shatkay H."/>
            <person name="Dew I."/>
            <person name="Miller J.R."/>
            <person name="Flanigan M.J."/>
            <person name="Edwards N.J."/>
            <person name="Bolanos R."/>
            <person name="Fasulo D."/>
            <person name="Halldorsson B.V."/>
            <person name="Hannenhalli S."/>
            <person name="Turner R."/>
            <person name="Yooseph S."/>
            <person name="Lu F."/>
            <person name="Nusskern D.R."/>
            <person name="Shue B.C."/>
            <person name="Zheng X.H."/>
            <person name="Zhong F."/>
            <person name="Delcher A.L."/>
            <person name="Huson D.H."/>
            <person name="Kravitz S.A."/>
            <person name="Mouchard L."/>
            <person name="Reinert K."/>
            <person name="Remington K.A."/>
            <person name="Clark A.G."/>
            <person name="Waterman M.S."/>
            <person name="Eichler E.E."/>
            <person name="Adams M.D."/>
            <person name="Hunkapiller M.W."/>
            <person name="Myers E.W."/>
            <person name="Venter J.C."/>
        </authorList>
    </citation>
    <scope>NUCLEOTIDE SEQUENCE [LARGE SCALE GENOMIC DNA]</scope>
</reference>
<reference key="3">
    <citation type="journal article" date="2004" name="Genome Res.">
        <title>The status, quality, and expansion of the NIH full-length cDNA project: the Mammalian Gene Collection (MGC).</title>
        <authorList>
            <consortium name="The MGC Project Team"/>
        </authorList>
    </citation>
    <scope>NUCLEOTIDE SEQUENCE [LARGE SCALE MRNA]</scope>
    <source>
        <tissue>Skin</tissue>
    </source>
</reference>
<reference key="4">
    <citation type="journal article" date="2011" name="BMC Syst. Biol.">
        <title>Initial characterization of the human central proteome.</title>
        <authorList>
            <person name="Burkard T.R."/>
            <person name="Planyavsky M."/>
            <person name="Kaupe I."/>
            <person name="Breitwieser F.P."/>
            <person name="Buerckstuemmer T."/>
            <person name="Bennett K.L."/>
            <person name="Superti-Furga G."/>
            <person name="Colinge J."/>
        </authorList>
    </citation>
    <scope>IDENTIFICATION BY MASS SPECTROMETRY [LARGE SCALE ANALYSIS]</scope>
</reference>
<reference key="5">
    <citation type="journal article" date="2011" name="Mol. Biol. Cell">
        <title>C4orf41 and TTC-15 are mammalian TRAPP components with a role at an early stage in ER-to-Golgi trafficking.</title>
        <authorList>
            <person name="Scrivens P.J."/>
            <person name="Noueihed B."/>
            <person name="Shahrzad N."/>
            <person name="Hul S."/>
            <person name="Brunet S."/>
            <person name="Sacher M."/>
        </authorList>
    </citation>
    <scope>IDENTIFICATION IN TRAPP COMPLEX</scope>
</reference>
<reference key="6">
    <citation type="journal article" date="2013" name="J. Proteome Res.">
        <title>Toward a comprehensive characterization of a human cancer cell phosphoproteome.</title>
        <authorList>
            <person name="Zhou H."/>
            <person name="Di Palma S."/>
            <person name="Preisinger C."/>
            <person name="Peng M."/>
            <person name="Polat A.N."/>
            <person name="Heck A.J."/>
            <person name="Mohammed S."/>
        </authorList>
    </citation>
    <scope>PHOSPHORYLATION [LARGE SCALE ANALYSIS] AT SER-10</scope>
    <scope>IDENTIFICATION BY MASS SPECTROMETRY [LARGE SCALE ANALYSIS]</scope>
    <source>
        <tissue>Erythroleukemia</tissue>
    </source>
</reference>
<feature type="chain" id="PRO_0000211579" description="Trafficking protein particle complex subunit 5">
    <location>
        <begin position="1"/>
        <end position="188"/>
    </location>
</feature>
<feature type="modified residue" description="Phosphoserine" evidence="4">
    <location>
        <position position="10"/>
    </location>
</feature>
<feature type="sequence variant" id="VAR_052398" description="In dbSNP:rs6952.">
    <original>S</original>
    <variation>A</variation>
    <location>
        <position position="52"/>
    </location>
</feature>
<sequence>MEARFTRGKSALLERALARPRTEVSLSAFALLFSELVQHCQSRVFSVAELQSRLAALGRQVGARVLDALVAREKGARRETKVLGALLFVKGAVWKALFGKEADKLEQANDDARTFYIIEREPLINTYISVPKENSTLNCASFTAGIVEAVLTHSGFPAKVTAHWHKGTTLMIKFEEAVIARDRALEGR</sequence>
<evidence type="ECO:0000250" key="1"/>
<evidence type="ECO:0000269" key="2">
    <source>
    </source>
</evidence>
<evidence type="ECO:0000305" key="3"/>
<evidence type="ECO:0007744" key="4">
    <source>
    </source>
</evidence>
<keyword id="KW-0256">Endoplasmic reticulum</keyword>
<keyword id="KW-0931">ER-Golgi transport</keyword>
<keyword id="KW-0333">Golgi apparatus</keyword>
<keyword id="KW-0597">Phosphoprotein</keyword>
<keyword id="KW-1267">Proteomics identification</keyword>
<keyword id="KW-1185">Reference proteome</keyword>
<keyword id="KW-0813">Transport</keyword>
<dbReference type="EMBL" id="AK292001">
    <property type="protein sequence ID" value="BAF84690.1"/>
    <property type="molecule type" value="mRNA"/>
</dbReference>
<dbReference type="EMBL" id="CH471139">
    <property type="protein sequence ID" value="EAW69012.1"/>
    <property type="molecule type" value="Genomic_DNA"/>
</dbReference>
<dbReference type="EMBL" id="BC042161">
    <property type="protein sequence ID" value="AAH42161.1"/>
    <property type="molecule type" value="mRNA"/>
</dbReference>
<dbReference type="CCDS" id="CCDS42490.1"/>
<dbReference type="RefSeq" id="NP_001035926.1">
    <property type="nucleotide sequence ID" value="NM_001042461.3"/>
</dbReference>
<dbReference type="RefSeq" id="NP_001035927.1">
    <property type="nucleotide sequence ID" value="NM_001042462.2"/>
</dbReference>
<dbReference type="RefSeq" id="NP_777554.1">
    <property type="nucleotide sequence ID" value="NM_174894.3"/>
</dbReference>
<dbReference type="SMR" id="Q8IUR0"/>
<dbReference type="BioGRID" id="125945">
    <property type="interactions" value="144"/>
</dbReference>
<dbReference type="ComplexPortal" id="CPX-4749">
    <property type="entry name" value="TRAPP II complex, TRAPPC2 variant"/>
</dbReference>
<dbReference type="ComplexPortal" id="CPX-4750">
    <property type="entry name" value="TRAPP III complex, TRAPPC2 variant"/>
</dbReference>
<dbReference type="ComplexPortal" id="CPX-6902">
    <property type="entry name" value="TRAPP II complex, TRAPPC2B variant"/>
</dbReference>
<dbReference type="ComplexPortal" id="CPX-6903">
    <property type="entry name" value="TRAPP III complex, TRAPPC2B variant"/>
</dbReference>
<dbReference type="CORUM" id="Q8IUR0"/>
<dbReference type="FunCoup" id="Q8IUR0">
    <property type="interactions" value="1222"/>
</dbReference>
<dbReference type="IntAct" id="Q8IUR0">
    <property type="interactions" value="68"/>
</dbReference>
<dbReference type="MINT" id="Q8IUR0"/>
<dbReference type="STRING" id="9606.ENSP00000470262"/>
<dbReference type="ChEMBL" id="CHEMBL4295892"/>
<dbReference type="DrugBank" id="DB08342">
    <property type="generic name" value="S-palmitoyl-L-cysteine"/>
</dbReference>
<dbReference type="iPTMnet" id="Q8IUR0"/>
<dbReference type="PhosphoSitePlus" id="Q8IUR0"/>
<dbReference type="BioMuta" id="TRAPPC5"/>
<dbReference type="DMDM" id="71153352"/>
<dbReference type="jPOST" id="Q8IUR0"/>
<dbReference type="MassIVE" id="Q8IUR0"/>
<dbReference type="PaxDb" id="9606-ENSP00000470262"/>
<dbReference type="PeptideAtlas" id="Q8IUR0"/>
<dbReference type="ProteomicsDB" id="70597"/>
<dbReference type="Pumba" id="Q8IUR0"/>
<dbReference type="Antibodypedia" id="24583">
    <property type="antibodies" value="98 antibodies from 24 providers"/>
</dbReference>
<dbReference type="DNASU" id="126003"/>
<dbReference type="Ensembl" id="ENST00000317378.5">
    <property type="protein sequence ID" value="ENSP00000316990.4"/>
    <property type="gene ID" value="ENSG00000181029.9"/>
</dbReference>
<dbReference type="Ensembl" id="ENST00000426877.2">
    <property type="protein sequence ID" value="ENSP00000399025.1"/>
    <property type="gene ID" value="ENSG00000181029.9"/>
</dbReference>
<dbReference type="Ensembl" id="ENST00000596148.3">
    <property type="protein sequence ID" value="ENSP00000470262.1"/>
    <property type="gene ID" value="ENSG00000181029.9"/>
</dbReference>
<dbReference type="GeneID" id="126003"/>
<dbReference type="KEGG" id="hsa:126003"/>
<dbReference type="MANE-Select" id="ENST00000596148.3">
    <property type="protein sequence ID" value="ENSP00000470262.1"/>
    <property type="RefSeq nucleotide sequence ID" value="NM_001042462.2"/>
    <property type="RefSeq protein sequence ID" value="NP_001035927.1"/>
</dbReference>
<dbReference type="UCSC" id="uc002mhi.2">
    <property type="organism name" value="human"/>
</dbReference>
<dbReference type="AGR" id="HGNC:23067"/>
<dbReference type="CTD" id="126003"/>
<dbReference type="DisGeNET" id="126003"/>
<dbReference type="GeneCards" id="TRAPPC5"/>
<dbReference type="HGNC" id="HGNC:23067">
    <property type="gene designation" value="TRAPPC5"/>
</dbReference>
<dbReference type="HPA" id="ENSG00000181029">
    <property type="expression patterns" value="Low tissue specificity"/>
</dbReference>
<dbReference type="neXtProt" id="NX_Q8IUR0"/>
<dbReference type="OpenTargets" id="ENSG00000181029"/>
<dbReference type="PharmGKB" id="PA134875218"/>
<dbReference type="VEuPathDB" id="HostDB:ENSG00000181029"/>
<dbReference type="eggNOG" id="KOG3315">
    <property type="taxonomic scope" value="Eukaryota"/>
</dbReference>
<dbReference type="GeneTree" id="ENSGT00390000000976"/>
<dbReference type="HOGENOM" id="CLU_073154_2_0_1"/>
<dbReference type="InParanoid" id="Q8IUR0"/>
<dbReference type="OMA" id="YMVKFDD"/>
<dbReference type="OrthoDB" id="10254842at2759"/>
<dbReference type="PAN-GO" id="Q8IUR0">
    <property type="GO annotations" value="4 GO annotations based on evolutionary models"/>
</dbReference>
<dbReference type="PhylomeDB" id="Q8IUR0"/>
<dbReference type="TreeFam" id="TF313795"/>
<dbReference type="PathwayCommons" id="Q8IUR0"/>
<dbReference type="Reactome" id="R-HSA-204005">
    <property type="pathway name" value="COPII-mediated vesicle transport"/>
</dbReference>
<dbReference type="Reactome" id="R-HSA-8876198">
    <property type="pathway name" value="RAB GEFs exchange GTP for GDP on RABs"/>
</dbReference>
<dbReference type="SignaLink" id="Q8IUR0"/>
<dbReference type="BioGRID-ORCS" id="126003">
    <property type="hits" value="703 hits in 1088 CRISPR screens"/>
</dbReference>
<dbReference type="ChiTaRS" id="TRAPPC5">
    <property type="organism name" value="human"/>
</dbReference>
<dbReference type="GenomeRNAi" id="126003"/>
<dbReference type="Pharos" id="Q8IUR0">
    <property type="development level" value="Tdark"/>
</dbReference>
<dbReference type="PRO" id="PR:Q8IUR0"/>
<dbReference type="Proteomes" id="UP000005640">
    <property type="component" value="Chromosome 19"/>
</dbReference>
<dbReference type="RNAct" id="Q8IUR0">
    <property type="molecule type" value="protein"/>
</dbReference>
<dbReference type="Bgee" id="ENSG00000181029">
    <property type="expression patterns" value="Expressed in left testis and 97 other cell types or tissues"/>
</dbReference>
<dbReference type="ExpressionAtlas" id="Q8IUR0">
    <property type="expression patterns" value="baseline and differential"/>
</dbReference>
<dbReference type="GO" id="GO:0005737">
    <property type="term" value="C:cytoplasm"/>
    <property type="evidence" value="ECO:0000303"/>
    <property type="project" value="ComplexPortal"/>
</dbReference>
<dbReference type="GO" id="GO:0005829">
    <property type="term" value="C:cytosol"/>
    <property type="evidence" value="ECO:0000304"/>
    <property type="project" value="Reactome"/>
</dbReference>
<dbReference type="GO" id="GO:0005783">
    <property type="term" value="C:endoplasmic reticulum"/>
    <property type="evidence" value="ECO:0007669"/>
    <property type="project" value="UniProtKB-SubCell"/>
</dbReference>
<dbReference type="GO" id="GO:0030008">
    <property type="term" value="C:TRAPP complex"/>
    <property type="evidence" value="ECO:0000314"/>
    <property type="project" value="UniProtKB"/>
</dbReference>
<dbReference type="GO" id="GO:1990070">
    <property type="term" value="C:TRAPPI protein complex"/>
    <property type="evidence" value="ECO:0000318"/>
    <property type="project" value="GO_Central"/>
</dbReference>
<dbReference type="GO" id="GO:1990071">
    <property type="term" value="C:TRAPPII protein complex"/>
    <property type="evidence" value="ECO:0000318"/>
    <property type="project" value="GO_Central"/>
</dbReference>
<dbReference type="GO" id="GO:1990072">
    <property type="term" value="C:TRAPPIII protein complex"/>
    <property type="evidence" value="ECO:0000318"/>
    <property type="project" value="GO_Central"/>
</dbReference>
<dbReference type="GO" id="GO:0048208">
    <property type="term" value="P:COPII vesicle coating"/>
    <property type="evidence" value="ECO:0000303"/>
    <property type="project" value="ComplexPortal"/>
</dbReference>
<dbReference type="GO" id="GO:0006888">
    <property type="term" value="P:endoplasmic reticulum to Golgi vesicle-mediated transport"/>
    <property type="evidence" value="ECO:0000318"/>
    <property type="project" value="GO_Central"/>
</dbReference>
<dbReference type="GO" id="GO:0006901">
    <property type="term" value="P:vesicle coating"/>
    <property type="evidence" value="ECO:0000303"/>
    <property type="project" value="ComplexPortal"/>
</dbReference>
<dbReference type="GO" id="GO:0099022">
    <property type="term" value="P:vesicle tethering"/>
    <property type="evidence" value="ECO:0000303"/>
    <property type="project" value="ComplexPortal"/>
</dbReference>
<dbReference type="CDD" id="cd14943">
    <property type="entry name" value="TRAPPC5_Trs31"/>
    <property type="match status" value="1"/>
</dbReference>
<dbReference type="FunFam" id="3.30.1380.20:FF:000005">
    <property type="entry name" value="Trafficking protein particle complex subunit 5"/>
    <property type="match status" value="1"/>
</dbReference>
<dbReference type="Gene3D" id="3.30.1380.20">
    <property type="entry name" value="Trafficking protein particle complex subunit 3"/>
    <property type="match status" value="1"/>
</dbReference>
<dbReference type="InterPro" id="IPR024096">
    <property type="entry name" value="NO_sig/Golgi_transp_ligand-bd"/>
</dbReference>
<dbReference type="InterPro" id="IPR016696">
    <property type="entry name" value="TRAPP-I_su5"/>
</dbReference>
<dbReference type="InterPro" id="IPR007194">
    <property type="entry name" value="TRAPP_component"/>
</dbReference>
<dbReference type="PANTHER" id="PTHR20902">
    <property type="entry name" value="41-2 PROTEIN ANTIGEN-RELATED"/>
    <property type="match status" value="1"/>
</dbReference>
<dbReference type="PANTHER" id="PTHR20902:SF0">
    <property type="entry name" value="TRAFFICKING PROTEIN PARTICLE COMPLEX SUBUNIT 5"/>
    <property type="match status" value="1"/>
</dbReference>
<dbReference type="Pfam" id="PF04051">
    <property type="entry name" value="TRAPP"/>
    <property type="match status" value="1"/>
</dbReference>
<dbReference type="PIRSF" id="PIRSF017479">
    <property type="entry name" value="TRAPP_I_complex_Trs31"/>
    <property type="match status" value="1"/>
</dbReference>
<dbReference type="SUPFAM" id="SSF111126">
    <property type="entry name" value="Ligand-binding domain in the NO signalling and Golgi transport"/>
    <property type="match status" value="1"/>
</dbReference>
<organism>
    <name type="scientific">Homo sapiens</name>
    <name type="common">Human</name>
    <dbReference type="NCBI Taxonomy" id="9606"/>
    <lineage>
        <taxon>Eukaryota</taxon>
        <taxon>Metazoa</taxon>
        <taxon>Chordata</taxon>
        <taxon>Craniata</taxon>
        <taxon>Vertebrata</taxon>
        <taxon>Euteleostomi</taxon>
        <taxon>Mammalia</taxon>
        <taxon>Eutheria</taxon>
        <taxon>Euarchontoglires</taxon>
        <taxon>Primates</taxon>
        <taxon>Haplorrhini</taxon>
        <taxon>Catarrhini</taxon>
        <taxon>Hominidae</taxon>
        <taxon>Homo</taxon>
    </lineage>
</organism>
<accession>Q8IUR0</accession>
<accession>A8K7I6</accession>
<comment type="function">
    <text>May play a role in vesicular transport from endoplasmic reticulum to Golgi.</text>
</comment>
<comment type="subunit">
    <text evidence="2">Component of the multisubunit TRAPP (transport protein particle) complex, which includes at least TRAPPC2, TRAPPC2L, TRAPPC3, TRAPPC3L, TRAPPC4, TRAPPC5, TRAPPC8, TRAPPC9, TRAPPC10, TRAPPC11 and TRAPPC12.</text>
</comment>
<comment type="interaction">
    <interactant intactId="EBI-3246160">
        <id>Q8IUR0</id>
    </interactant>
    <interactant intactId="EBI-748961">
        <id>O95273</id>
        <label>CCNDBP1</label>
    </interactant>
    <organismsDiffer>false</organismsDiffer>
    <experiments>8</experiments>
</comment>
<comment type="interaction">
    <interactant intactId="EBI-3246160">
        <id>Q8IUR0</id>
    </interactant>
    <interactant intactId="EBI-740641">
        <id>Q9NP66</id>
        <label>HMG20A</label>
    </interactant>
    <organismsDiffer>false</organismsDiffer>
    <experiments>5</experiments>
</comment>
<comment type="interaction">
    <interactant intactId="EBI-3246160">
        <id>Q8IUR0</id>
    </interactant>
    <interactant intactId="EBI-11961968">
        <id>P0DI81-3</id>
        <label>TRAPPC2</label>
    </interactant>
    <organismsDiffer>false</organismsDiffer>
    <experiments>5</experiments>
</comment>
<comment type="interaction">
    <interactant intactId="EBI-3246160">
        <id>Q8IUR0</id>
    </interactant>
    <interactant intactId="EBI-743566">
        <id>O43617</id>
        <label>TRAPPC3</label>
    </interactant>
    <organismsDiffer>false</organismsDiffer>
    <experiments>9</experiments>
</comment>
<comment type="subcellular location">
    <subcellularLocation>
        <location evidence="1">Golgi apparatus</location>
        <location evidence="1">cis-Golgi network</location>
    </subcellularLocation>
    <subcellularLocation>
        <location evidence="1">Endoplasmic reticulum</location>
    </subcellularLocation>
</comment>
<comment type="similarity">
    <text evidence="3">Belongs to the TRAPP small subunits family. BET3 subfamily.</text>
</comment>
<gene>
    <name type="primary">TRAPPC5</name>
</gene>